<keyword id="KW-1015">Disulfide bond</keyword>
<keyword id="KW-0528">Neurotoxin</keyword>
<keyword id="KW-0629">Postsynaptic neurotoxin</keyword>
<keyword id="KW-0964">Secreted</keyword>
<keyword id="KW-0732">Signal</keyword>
<keyword id="KW-0800">Toxin</keyword>
<dbReference type="EMBL" id="GU292897">
    <property type="protein sequence ID" value="ADB56713.1"/>
    <property type="molecule type" value="mRNA"/>
</dbReference>
<dbReference type="ArachnoServer" id="AS001597">
    <property type="toxin name" value="U4-theraphotoxin-Hhn1ad"/>
</dbReference>
<dbReference type="GO" id="GO:0005576">
    <property type="term" value="C:extracellular region"/>
    <property type="evidence" value="ECO:0007669"/>
    <property type="project" value="UniProtKB-SubCell"/>
</dbReference>
<dbReference type="GO" id="GO:0035792">
    <property type="term" value="C:host cell postsynaptic membrane"/>
    <property type="evidence" value="ECO:0007669"/>
    <property type="project" value="UniProtKB-KW"/>
</dbReference>
<dbReference type="GO" id="GO:0090729">
    <property type="term" value="F:toxin activity"/>
    <property type="evidence" value="ECO:0007669"/>
    <property type="project" value="UniProtKB-KW"/>
</dbReference>
<dbReference type="InterPro" id="IPR012625">
    <property type="entry name" value="Hwtx-2-like"/>
</dbReference>
<dbReference type="Pfam" id="PF08089">
    <property type="entry name" value="Toxin_20"/>
    <property type="match status" value="1"/>
</dbReference>
<dbReference type="SUPFAM" id="SSF57059">
    <property type="entry name" value="omega toxin-like"/>
    <property type="match status" value="1"/>
</dbReference>
<dbReference type="PROSITE" id="PS60022">
    <property type="entry name" value="HWTX_2"/>
    <property type="match status" value="1"/>
</dbReference>
<evidence type="ECO:0000250" key="1"/>
<evidence type="ECO:0000255" key="2"/>
<evidence type="ECO:0000305" key="3"/>
<feature type="signal peptide" evidence="2">
    <location>
        <begin position="1"/>
        <end position="22"/>
    </location>
</feature>
<feature type="propeptide" id="PRO_0000400783" evidence="1">
    <location>
        <begin position="23"/>
        <end position="48"/>
    </location>
</feature>
<feature type="peptide" id="PRO_0000400784" description="U4-theraphotoxin-Hhn1ad">
    <location>
        <begin position="49"/>
        <end position="85"/>
    </location>
</feature>
<feature type="disulfide bond" evidence="1">
    <location>
        <begin position="52"/>
        <end position="66"/>
    </location>
</feature>
<feature type="disulfide bond" evidence="1">
    <location>
        <begin position="56"/>
        <end position="77"/>
    </location>
</feature>
<feature type="disulfide bond" evidence="1">
    <location>
        <begin position="71"/>
        <end position="82"/>
    </location>
</feature>
<protein>
    <recommendedName>
        <fullName>U4-theraphotoxin-Hhn1ad</fullName>
        <shortName>U4-TRTX-Hhn1ad</shortName>
    </recommendedName>
    <alternativeName>
        <fullName>Hainantoxin-II-9</fullName>
        <shortName>HNTX-II-9</shortName>
    </alternativeName>
</protein>
<proteinExistence type="evidence at transcript level"/>
<sequence length="85" mass="9486">MKVTLIAILTCAAVLVLHTTAAEELKTESQLMEVGMPDTELATVDEERLFKCSVSCEIEKESNKDCKKKKCKGGWKCKFNMCVKV</sequence>
<organism>
    <name type="scientific">Cyriopagopus hainanus</name>
    <name type="common">Chinese bird spider</name>
    <name type="synonym">Haplopelma hainanum</name>
    <dbReference type="NCBI Taxonomy" id="209901"/>
    <lineage>
        <taxon>Eukaryota</taxon>
        <taxon>Metazoa</taxon>
        <taxon>Ecdysozoa</taxon>
        <taxon>Arthropoda</taxon>
        <taxon>Chelicerata</taxon>
        <taxon>Arachnida</taxon>
        <taxon>Araneae</taxon>
        <taxon>Mygalomorphae</taxon>
        <taxon>Theraphosidae</taxon>
        <taxon>Haplopelma</taxon>
    </lineage>
</organism>
<accession>D2Y220</accession>
<name>H2I01_CYRHA</name>
<comment type="function">
    <text evidence="1">Postsynaptic neurotoxin.</text>
</comment>
<comment type="subcellular location">
    <subcellularLocation>
        <location evidence="1">Secreted</location>
    </subcellularLocation>
</comment>
<comment type="tissue specificity">
    <text>Expressed by the venom gland.</text>
</comment>
<comment type="similarity">
    <text evidence="3">Belongs to the neurotoxin 12 (Hwtx-2) family. 02 (Hwtx-2) subfamily.</text>
</comment>
<reference key="1">
    <citation type="journal article" date="2010" name="J. Proteome Res.">
        <title>Molecular diversification of peptide toxins from the tarantula Haplopelma hainanum (Ornithoctonus hainana) venom based on transcriptomic, peptidomic, and genomic analyses.</title>
        <authorList>
            <person name="Tang X."/>
            <person name="Zhang Y."/>
            <person name="Hu W."/>
            <person name="Xu D."/>
            <person name="Tao H."/>
            <person name="Yang X."/>
            <person name="Li Y."/>
            <person name="Jiang L."/>
            <person name="Liang S."/>
        </authorList>
    </citation>
    <scope>NUCLEOTIDE SEQUENCE [LARGE SCALE MRNA]</scope>
    <source>
        <tissue>Venom gland</tissue>
    </source>
</reference>